<sequence>MTSSPTHQVVHEANNIKKQETPKEFFERQPRQGHITSLEQYQELYEKSINDPETFFGEFGKELLHWDRDFERVKSGSLLHGDAAWFIGGQLNACYNCVDRHAFATPNKPAIIYEADEEKDSKILTFAELLREVCQVAGVLQSWGIKKGDTVAIYMPMNSQAIIAMLAVARLGAIHSVIFAGFSSGSIKDRVNDASCKALITCDEGRRGGKTINIKKLCDEALLNCPSIEKVLVYERTGNKEVTLKEGRDYWWSEETQKFAGYLPPVPVNSEDPLFLLYTSGSTGTPKGVVHSTAGYLLGAALTTKYVFDIHPEDVLFTAGDVGWITGHTYALYGPLSLGVPTVVFEGTPAFPDYGRLWQIVEKHKATHFYVAPTALRLLRKSGEQEIEKYDLSSLRTLGSVGEPISPDIWEWYNEKVGKGQCHVTDTYWQTESGSHFIAPIAGVVPNKPGSAAVPFFGIQTCLIDPVSGIEIQGNDVEGVLAVKDTWPSMARSVYKNHTKYMDTYLNPYPGYYFTGDGAARDHDGYYWIRGRVDDVVNVSGHRLSTAEIEAALIEHNAISEAAVVGMNDDLTGQTVVAFVALKEHLIANLKADESPEEALKLKKEMILQVRTQIGPFAAPKSVIIVEDLPKTRSGKIMRRILRKIAAGEADQLGDITTLSNPQSVAGIIGSFDSQFGKK</sequence>
<gene>
    <name type="primary">ACS2</name>
    <name type="ordered locus">DEHA2D12606g</name>
</gene>
<name>ACS2_DEBHA</name>
<keyword id="KW-0067">ATP-binding</keyword>
<keyword id="KW-0436">Ligase</keyword>
<keyword id="KW-0547">Nucleotide-binding</keyword>
<keyword id="KW-1185">Reference proteome</keyword>
<comment type="catalytic activity">
    <reaction>
        <text>acetate + ATP + CoA = acetyl-CoA + AMP + diphosphate</text>
        <dbReference type="Rhea" id="RHEA:23176"/>
        <dbReference type="ChEBI" id="CHEBI:30089"/>
        <dbReference type="ChEBI" id="CHEBI:30616"/>
        <dbReference type="ChEBI" id="CHEBI:33019"/>
        <dbReference type="ChEBI" id="CHEBI:57287"/>
        <dbReference type="ChEBI" id="CHEBI:57288"/>
        <dbReference type="ChEBI" id="CHEBI:456215"/>
        <dbReference type="EC" id="6.2.1.1"/>
    </reaction>
</comment>
<comment type="similarity">
    <text evidence="3">Belongs to the ATP-dependent AMP-binding enzyme family.</text>
</comment>
<dbReference type="EC" id="6.2.1.1"/>
<dbReference type="EMBL" id="CR382136">
    <property type="protein sequence ID" value="CAG87188.1"/>
    <property type="molecule type" value="Genomic_DNA"/>
</dbReference>
<dbReference type="RefSeq" id="XP_459020.1">
    <property type="nucleotide sequence ID" value="XM_459020.1"/>
</dbReference>
<dbReference type="SMR" id="Q6BS00"/>
<dbReference type="FunCoup" id="Q6BS00">
    <property type="interactions" value="797"/>
</dbReference>
<dbReference type="STRING" id="284592.Q6BS00"/>
<dbReference type="GeneID" id="2901554"/>
<dbReference type="KEGG" id="dha:DEHA2D12606g"/>
<dbReference type="VEuPathDB" id="FungiDB:DEHA2D12606g"/>
<dbReference type="eggNOG" id="KOG1175">
    <property type="taxonomic scope" value="Eukaryota"/>
</dbReference>
<dbReference type="HOGENOM" id="CLU_000022_3_6_1"/>
<dbReference type="InParanoid" id="Q6BS00"/>
<dbReference type="OMA" id="TVHTKKI"/>
<dbReference type="OrthoDB" id="1706066at2759"/>
<dbReference type="Proteomes" id="UP000000599">
    <property type="component" value="Chromosome D"/>
</dbReference>
<dbReference type="GO" id="GO:0005829">
    <property type="term" value="C:cytosol"/>
    <property type="evidence" value="ECO:0007669"/>
    <property type="project" value="EnsemblFungi"/>
</dbReference>
<dbReference type="GO" id="GO:0005730">
    <property type="term" value="C:nucleolus"/>
    <property type="evidence" value="ECO:0007669"/>
    <property type="project" value="EnsemblFungi"/>
</dbReference>
<dbReference type="GO" id="GO:0003987">
    <property type="term" value="F:acetate-CoA ligase activity"/>
    <property type="evidence" value="ECO:0007669"/>
    <property type="project" value="UniProtKB-EC"/>
</dbReference>
<dbReference type="GO" id="GO:0016880">
    <property type="term" value="F:acid-ammonia (or amide) ligase activity"/>
    <property type="evidence" value="ECO:0007669"/>
    <property type="project" value="EnsemblFungi"/>
</dbReference>
<dbReference type="GO" id="GO:0016208">
    <property type="term" value="F:AMP binding"/>
    <property type="evidence" value="ECO:0007669"/>
    <property type="project" value="InterPro"/>
</dbReference>
<dbReference type="GO" id="GO:0005524">
    <property type="term" value="F:ATP binding"/>
    <property type="evidence" value="ECO:0007669"/>
    <property type="project" value="UniProtKB-KW"/>
</dbReference>
<dbReference type="GO" id="GO:0019427">
    <property type="term" value="P:acetyl-CoA biosynthetic process from acetate"/>
    <property type="evidence" value="ECO:0007669"/>
    <property type="project" value="InterPro"/>
</dbReference>
<dbReference type="CDD" id="cd05966">
    <property type="entry name" value="ACS"/>
    <property type="match status" value="1"/>
</dbReference>
<dbReference type="FunFam" id="3.40.50.12780:FF:000001">
    <property type="entry name" value="Acetyl-coenzyme A synthetase"/>
    <property type="match status" value="1"/>
</dbReference>
<dbReference type="Gene3D" id="3.30.300.30">
    <property type="match status" value="1"/>
</dbReference>
<dbReference type="Gene3D" id="3.40.50.12780">
    <property type="entry name" value="N-terminal domain of ligase-like"/>
    <property type="match status" value="1"/>
</dbReference>
<dbReference type="InterPro" id="IPR011904">
    <property type="entry name" value="Ac_CoA_lig"/>
</dbReference>
<dbReference type="InterPro" id="IPR032387">
    <property type="entry name" value="ACAS_N"/>
</dbReference>
<dbReference type="InterPro" id="IPR025110">
    <property type="entry name" value="AMP-bd_C"/>
</dbReference>
<dbReference type="InterPro" id="IPR045851">
    <property type="entry name" value="AMP-bd_C_sf"/>
</dbReference>
<dbReference type="InterPro" id="IPR020845">
    <property type="entry name" value="AMP-binding_CS"/>
</dbReference>
<dbReference type="InterPro" id="IPR000873">
    <property type="entry name" value="AMP-dep_synth/lig_dom"/>
</dbReference>
<dbReference type="InterPro" id="IPR042099">
    <property type="entry name" value="ANL_N_sf"/>
</dbReference>
<dbReference type="NCBIfam" id="TIGR02188">
    <property type="entry name" value="Ac_CoA_lig_AcsA"/>
    <property type="match status" value="1"/>
</dbReference>
<dbReference type="NCBIfam" id="NF001208">
    <property type="entry name" value="PRK00174.1"/>
    <property type="match status" value="1"/>
</dbReference>
<dbReference type="PANTHER" id="PTHR24095">
    <property type="entry name" value="ACETYL-COENZYME A SYNTHETASE"/>
    <property type="match status" value="1"/>
</dbReference>
<dbReference type="PANTHER" id="PTHR24095:SF245">
    <property type="entry name" value="ACETYL-COENZYME A SYNTHETASE 2"/>
    <property type="match status" value="1"/>
</dbReference>
<dbReference type="Pfam" id="PF16177">
    <property type="entry name" value="ACAS_N"/>
    <property type="match status" value="1"/>
</dbReference>
<dbReference type="Pfam" id="PF00501">
    <property type="entry name" value="AMP-binding"/>
    <property type="match status" value="1"/>
</dbReference>
<dbReference type="Pfam" id="PF13193">
    <property type="entry name" value="AMP-binding_C"/>
    <property type="match status" value="1"/>
</dbReference>
<dbReference type="SUPFAM" id="SSF56801">
    <property type="entry name" value="Acetyl-CoA synthetase-like"/>
    <property type="match status" value="1"/>
</dbReference>
<dbReference type="PROSITE" id="PS00455">
    <property type="entry name" value="AMP_BINDING"/>
    <property type="match status" value="1"/>
</dbReference>
<accession>Q6BS00</accession>
<proteinExistence type="inferred from homology"/>
<protein>
    <recommendedName>
        <fullName>Acetyl-coenzyme A synthetase 2</fullName>
        <ecNumber>6.2.1.1</ecNumber>
    </recommendedName>
    <alternativeName>
        <fullName>Acetate--CoA ligase 2</fullName>
    </alternativeName>
    <alternativeName>
        <fullName>Acyl-activating enzyme 2</fullName>
    </alternativeName>
</protein>
<feature type="chain" id="PRO_0000208412" description="Acetyl-coenzyme A synthetase 2">
    <location>
        <begin position="1"/>
        <end position="679"/>
    </location>
</feature>
<feature type="region of interest" description="Disordered" evidence="2">
    <location>
        <begin position="1"/>
        <end position="32"/>
    </location>
</feature>
<feature type="compositionally biased region" description="Basic and acidic residues" evidence="2">
    <location>
        <begin position="14"/>
        <end position="30"/>
    </location>
</feature>
<feature type="binding site" evidence="1">
    <location>
        <begin position="207"/>
        <end position="210"/>
    </location>
    <ligand>
        <name>CoA</name>
        <dbReference type="ChEBI" id="CHEBI:57287"/>
    </ligand>
</feature>
<feature type="binding site" evidence="1">
    <location>
        <position position="326"/>
    </location>
    <ligand>
        <name>CoA</name>
        <dbReference type="ChEBI" id="CHEBI:57287"/>
    </ligand>
</feature>
<feature type="binding site" evidence="1">
    <location>
        <begin position="402"/>
        <end position="404"/>
    </location>
    <ligand>
        <name>ATP</name>
        <dbReference type="ChEBI" id="CHEBI:30616"/>
    </ligand>
</feature>
<feature type="binding site" evidence="1">
    <location>
        <begin position="426"/>
        <end position="431"/>
    </location>
    <ligand>
        <name>ATP</name>
        <dbReference type="ChEBI" id="CHEBI:30616"/>
    </ligand>
</feature>
<feature type="binding site" evidence="1">
    <location>
        <position position="517"/>
    </location>
    <ligand>
        <name>ATP</name>
        <dbReference type="ChEBI" id="CHEBI:30616"/>
    </ligand>
</feature>
<feature type="binding site" evidence="1">
    <location>
        <position position="532"/>
    </location>
    <ligand>
        <name>ATP</name>
        <dbReference type="ChEBI" id="CHEBI:30616"/>
    </ligand>
</feature>
<feature type="binding site" evidence="1">
    <location>
        <position position="540"/>
    </location>
    <ligand>
        <name>CoA</name>
        <dbReference type="ChEBI" id="CHEBI:57287"/>
    </ligand>
</feature>
<feature type="binding site" evidence="1">
    <location>
        <position position="543"/>
    </location>
    <ligand>
        <name>ATP</name>
        <dbReference type="ChEBI" id="CHEBI:30616"/>
    </ligand>
</feature>
<feature type="binding site" evidence="1">
    <location>
        <position position="611"/>
    </location>
    <ligand>
        <name>CoA</name>
        <dbReference type="ChEBI" id="CHEBI:57287"/>
    </ligand>
</feature>
<evidence type="ECO:0000250" key="1"/>
<evidence type="ECO:0000256" key="2">
    <source>
        <dbReference type="SAM" id="MobiDB-lite"/>
    </source>
</evidence>
<evidence type="ECO:0000305" key="3"/>
<reference key="1">
    <citation type="journal article" date="2004" name="Nature">
        <title>Genome evolution in yeasts.</title>
        <authorList>
            <person name="Dujon B."/>
            <person name="Sherman D."/>
            <person name="Fischer G."/>
            <person name="Durrens P."/>
            <person name="Casaregola S."/>
            <person name="Lafontaine I."/>
            <person name="de Montigny J."/>
            <person name="Marck C."/>
            <person name="Neuveglise C."/>
            <person name="Talla E."/>
            <person name="Goffard N."/>
            <person name="Frangeul L."/>
            <person name="Aigle M."/>
            <person name="Anthouard V."/>
            <person name="Babour A."/>
            <person name="Barbe V."/>
            <person name="Barnay S."/>
            <person name="Blanchin S."/>
            <person name="Beckerich J.-M."/>
            <person name="Beyne E."/>
            <person name="Bleykasten C."/>
            <person name="Boisrame A."/>
            <person name="Boyer J."/>
            <person name="Cattolico L."/>
            <person name="Confanioleri F."/>
            <person name="de Daruvar A."/>
            <person name="Despons L."/>
            <person name="Fabre E."/>
            <person name="Fairhead C."/>
            <person name="Ferry-Dumazet H."/>
            <person name="Groppi A."/>
            <person name="Hantraye F."/>
            <person name="Hennequin C."/>
            <person name="Jauniaux N."/>
            <person name="Joyet P."/>
            <person name="Kachouri R."/>
            <person name="Kerrest A."/>
            <person name="Koszul R."/>
            <person name="Lemaire M."/>
            <person name="Lesur I."/>
            <person name="Ma L."/>
            <person name="Muller H."/>
            <person name="Nicaud J.-M."/>
            <person name="Nikolski M."/>
            <person name="Oztas S."/>
            <person name="Ozier-Kalogeropoulos O."/>
            <person name="Pellenz S."/>
            <person name="Potier S."/>
            <person name="Richard G.-F."/>
            <person name="Straub M.-L."/>
            <person name="Suleau A."/>
            <person name="Swennen D."/>
            <person name="Tekaia F."/>
            <person name="Wesolowski-Louvel M."/>
            <person name="Westhof E."/>
            <person name="Wirth B."/>
            <person name="Zeniou-Meyer M."/>
            <person name="Zivanovic Y."/>
            <person name="Bolotin-Fukuhara M."/>
            <person name="Thierry A."/>
            <person name="Bouchier C."/>
            <person name="Caudron B."/>
            <person name="Scarpelli C."/>
            <person name="Gaillardin C."/>
            <person name="Weissenbach J."/>
            <person name="Wincker P."/>
            <person name="Souciet J.-L."/>
        </authorList>
    </citation>
    <scope>NUCLEOTIDE SEQUENCE [LARGE SCALE GENOMIC DNA]</scope>
    <source>
        <strain>ATCC 36239 / CBS 767 / BCRC 21394 / JCM 1990 / NBRC 0083 / IGC 2968</strain>
    </source>
</reference>
<organism>
    <name type="scientific">Debaryomyces hansenii (strain ATCC 36239 / CBS 767 / BCRC 21394 / JCM 1990 / NBRC 0083 / IGC 2968)</name>
    <name type="common">Yeast</name>
    <name type="synonym">Torulaspora hansenii</name>
    <dbReference type="NCBI Taxonomy" id="284592"/>
    <lineage>
        <taxon>Eukaryota</taxon>
        <taxon>Fungi</taxon>
        <taxon>Dikarya</taxon>
        <taxon>Ascomycota</taxon>
        <taxon>Saccharomycotina</taxon>
        <taxon>Pichiomycetes</taxon>
        <taxon>Debaryomycetaceae</taxon>
        <taxon>Debaryomyces</taxon>
    </lineage>
</organism>